<reference key="1">
    <citation type="journal article" date="2002" name="Nature">
        <title>Sequence and analysis of rice chromosome 4.</title>
        <authorList>
            <person name="Feng Q."/>
            <person name="Zhang Y."/>
            <person name="Hao P."/>
            <person name="Wang S."/>
            <person name="Fu G."/>
            <person name="Huang Y."/>
            <person name="Li Y."/>
            <person name="Zhu J."/>
            <person name="Liu Y."/>
            <person name="Hu X."/>
            <person name="Jia P."/>
            <person name="Zhang Y."/>
            <person name="Zhao Q."/>
            <person name="Ying K."/>
            <person name="Yu S."/>
            <person name="Tang Y."/>
            <person name="Weng Q."/>
            <person name="Zhang L."/>
            <person name="Lu Y."/>
            <person name="Mu J."/>
            <person name="Lu Y."/>
            <person name="Zhang L.S."/>
            <person name="Yu Z."/>
            <person name="Fan D."/>
            <person name="Liu X."/>
            <person name="Lu T."/>
            <person name="Li C."/>
            <person name="Wu Y."/>
            <person name="Sun T."/>
            <person name="Lei H."/>
            <person name="Li T."/>
            <person name="Hu H."/>
            <person name="Guan J."/>
            <person name="Wu M."/>
            <person name="Zhang R."/>
            <person name="Zhou B."/>
            <person name="Chen Z."/>
            <person name="Chen L."/>
            <person name="Jin Z."/>
            <person name="Wang R."/>
            <person name="Yin H."/>
            <person name="Cai Z."/>
            <person name="Ren S."/>
            <person name="Lv G."/>
            <person name="Gu W."/>
            <person name="Zhu G."/>
            <person name="Tu Y."/>
            <person name="Jia J."/>
            <person name="Zhang Y."/>
            <person name="Chen J."/>
            <person name="Kang H."/>
            <person name="Chen X."/>
            <person name="Shao C."/>
            <person name="Sun Y."/>
            <person name="Hu Q."/>
            <person name="Zhang X."/>
            <person name="Zhang W."/>
            <person name="Wang L."/>
            <person name="Ding C."/>
            <person name="Sheng H."/>
            <person name="Gu J."/>
            <person name="Chen S."/>
            <person name="Ni L."/>
            <person name="Zhu F."/>
            <person name="Chen W."/>
            <person name="Lan L."/>
            <person name="Lai Y."/>
            <person name="Cheng Z."/>
            <person name="Gu M."/>
            <person name="Jiang J."/>
            <person name="Li J."/>
            <person name="Hong G."/>
            <person name="Xue Y."/>
            <person name="Han B."/>
        </authorList>
    </citation>
    <scope>NUCLEOTIDE SEQUENCE [LARGE SCALE GENOMIC DNA]</scope>
    <source>
        <strain>cv. Nipponbare</strain>
    </source>
</reference>
<reference key="2">
    <citation type="journal article" date="2005" name="Nature">
        <title>The map-based sequence of the rice genome.</title>
        <authorList>
            <consortium name="International rice genome sequencing project (IRGSP)"/>
        </authorList>
    </citation>
    <scope>NUCLEOTIDE SEQUENCE [LARGE SCALE GENOMIC DNA]</scope>
    <source>
        <strain>cv. Nipponbare</strain>
    </source>
</reference>
<reference key="3">
    <citation type="journal article" date="2008" name="Nucleic Acids Res.">
        <title>The rice annotation project database (RAP-DB): 2008 update.</title>
        <authorList>
            <consortium name="The rice annotation project (RAP)"/>
        </authorList>
    </citation>
    <scope>GENOME REANNOTATION</scope>
    <source>
        <strain>cv. Nipponbare</strain>
    </source>
</reference>
<reference key="4">
    <citation type="journal article" date="2013" name="Rice">
        <title>Improvement of the Oryza sativa Nipponbare reference genome using next generation sequence and optical map data.</title>
        <authorList>
            <person name="Kawahara Y."/>
            <person name="de la Bastide M."/>
            <person name="Hamilton J.P."/>
            <person name="Kanamori H."/>
            <person name="McCombie W.R."/>
            <person name="Ouyang S."/>
            <person name="Schwartz D.C."/>
            <person name="Tanaka T."/>
            <person name="Wu J."/>
            <person name="Zhou S."/>
            <person name="Childs K.L."/>
            <person name="Davidson R.M."/>
            <person name="Lin H."/>
            <person name="Quesada-Ocampo L."/>
            <person name="Vaillancourt B."/>
            <person name="Sakai H."/>
            <person name="Lee S.S."/>
            <person name="Kim J."/>
            <person name="Numa H."/>
            <person name="Itoh T."/>
            <person name="Buell C.R."/>
            <person name="Matsumoto T."/>
        </authorList>
    </citation>
    <scope>GENOME REANNOTATION</scope>
    <source>
        <strain>cv. Nipponbare</strain>
    </source>
</reference>
<reference key="5">
    <citation type="journal article" date="2010" name="BMC Genomics">
        <title>Genome-wide analysis of rice ClpB/HSP100, ClpC and ClpD genes.</title>
        <authorList>
            <person name="Singh A."/>
            <person name="Singh U."/>
            <person name="Mittal D."/>
            <person name="Grover A."/>
        </authorList>
    </citation>
    <scope>TISSUE SPECIFICITY</scope>
</reference>
<accession>Q7XL03</accession>
<accession>Q0JDG6</accession>
<organism>
    <name type="scientific">Oryza sativa subsp. japonica</name>
    <name type="common">Rice</name>
    <dbReference type="NCBI Taxonomy" id="39947"/>
    <lineage>
        <taxon>Eukaryota</taxon>
        <taxon>Viridiplantae</taxon>
        <taxon>Streptophyta</taxon>
        <taxon>Embryophyta</taxon>
        <taxon>Tracheophyta</taxon>
        <taxon>Spermatophyta</taxon>
        <taxon>Magnoliopsida</taxon>
        <taxon>Liliopsida</taxon>
        <taxon>Poales</taxon>
        <taxon>Poaceae</taxon>
        <taxon>BOP clade</taxon>
        <taxon>Oryzoideae</taxon>
        <taxon>Oryzeae</taxon>
        <taxon>Oryzinae</taxon>
        <taxon>Oryza</taxon>
        <taxon>Oryza sativa</taxon>
    </lineage>
</organism>
<name>CLPD2_ORYSJ</name>
<proteinExistence type="evidence at transcript level"/>
<dbReference type="EMBL" id="AL731639">
    <property type="protein sequence ID" value="CAE05369.1"/>
    <property type="status" value="ALT_SEQ"/>
    <property type="molecule type" value="Genomic_DNA"/>
</dbReference>
<dbReference type="EMBL" id="AP008210">
    <property type="protein sequence ID" value="BAF14621.1"/>
    <property type="status" value="ALT_SEQ"/>
    <property type="molecule type" value="Genomic_DNA"/>
</dbReference>
<dbReference type="EMBL" id="AP014960">
    <property type="status" value="NOT_ANNOTATED_CDS"/>
    <property type="molecule type" value="Genomic_DNA"/>
</dbReference>
<dbReference type="RefSeq" id="XP_015636344.1">
    <property type="nucleotide sequence ID" value="XM_015780858.1"/>
</dbReference>
<dbReference type="SMR" id="Q7XL03"/>
<dbReference type="FunCoup" id="Q7XL03">
    <property type="interactions" value="286"/>
</dbReference>
<dbReference type="STRING" id="39947.Q7XL03"/>
<dbReference type="PaxDb" id="39947-Q7XL03"/>
<dbReference type="KEGG" id="dosa:Os04g0405000"/>
<dbReference type="InParanoid" id="Q7XL03"/>
<dbReference type="OrthoDB" id="47330at2759"/>
<dbReference type="Proteomes" id="UP000000763">
    <property type="component" value="Chromosome 4"/>
</dbReference>
<dbReference type="Proteomes" id="UP000059680">
    <property type="component" value="Chromosome 4"/>
</dbReference>
<dbReference type="GO" id="GO:0009507">
    <property type="term" value="C:chloroplast"/>
    <property type="evidence" value="ECO:0007669"/>
    <property type="project" value="UniProtKB-SubCell"/>
</dbReference>
<dbReference type="GO" id="GO:0005524">
    <property type="term" value="F:ATP binding"/>
    <property type="evidence" value="ECO:0007669"/>
    <property type="project" value="UniProtKB-KW"/>
</dbReference>
<dbReference type="GO" id="GO:0016887">
    <property type="term" value="F:ATP hydrolysis activity"/>
    <property type="evidence" value="ECO:0007669"/>
    <property type="project" value="InterPro"/>
</dbReference>
<dbReference type="CDD" id="cd00009">
    <property type="entry name" value="AAA"/>
    <property type="match status" value="1"/>
</dbReference>
<dbReference type="CDD" id="cd19499">
    <property type="entry name" value="RecA-like_ClpB_Hsp104-like"/>
    <property type="match status" value="1"/>
</dbReference>
<dbReference type="FunFam" id="3.40.50.300:FF:000025">
    <property type="entry name" value="ATP-dependent Clp protease subunit"/>
    <property type="match status" value="1"/>
</dbReference>
<dbReference type="Gene3D" id="1.10.8.60">
    <property type="match status" value="2"/>
</dbReference>
<dbReference type="Gene3D" id="1.10.1780.10">
    <property type="entry name" value="Clp, N-terminal domain"/>
    <property type="match status" value="1"/>
</dbReference>
<dbReference type="Gene3D" id="3.40.50.300">
    <property type="entry name" value="P-loop containing nucleotide triphosphate hydrolases"/>
    <property type="match status" value="2"/>
</dbReference>
<dbReference type="InterPro" id="IPR003593">
    <property type="entry name" value="AAA+_ATPase"/>
</dbReference>
<dbReference type="InterPro" id="IPR003959">
    <property type="entry name" value="ATPase_AAA_core"/>
</dbReference>
<dbReference type="InterPro" id="IPR019489">
    <property type="entry name" value="Clp_ATPase_C"/>
</dbReference>
<dbReference type="InterPro" id="IPR036628">
    <property type="entry name" value="Clp_N_dom_sf"/>
</dbReference>
<dbReference type="InterPro" id="IPR004176">
    <property type="entry name" value="Clp_R_dom"/>
</dbReference>
<dbReference type="InterPro" id="IPR001270">
    <property type="entry name" value="ClpA/B"/>
</dbReference>
<dbReference type="InterPro" id="IPR018368">
    <property type="entry name" value="ClpA/B_CS1"/>
</dbReference>
<dbReference type="InterPro" id="IPR028299">
    <property type="entry name" value="ClpA/B_CS2"/>
</dbReference>
<dbReference type="InterPro" id="IPR041546">
    <property type="entry name" value="ClpA/ClpB_AAA_lid"/>
</dbReference>
<dbReference type="InterPro" id="IPR050130">
    <property type="entry name" value="ClpA_ClpB"/>
</dbReference>
<dbReference type="InterPro" id="IPR027417">
    <property type="entry name" value="P-loop_NTPase"/>
</dbReference>
<dbReference type="PANTHER" id="PTHR11638">
    <property type="entry name" value="ATP-DEPENDENT CLP PROTEASE"/>
    <property type="match status" value="1"/>
</dbReference>
<dbReference type="PANTHER" id="PTHR11638:SF185">
    <property type="entry name" value="ATP-DEPENDENT CLP PROTEASE ATP-BINDING SUBUNIT"/>
    <property type="match status" value="1"/>
</dbReference>
<dbReference type="Pfam" id="PF00004">
    <property type="entry name" value="AAA"/>
    <property type="match status" value="1"/>
</dbReference>
<dbReference type="Pfam" id="PF07724">
    <property type="entry name" value="AAA_2"/>
    <property type="match status" value="1"/>
</dbReference>
<dbReference type="Pfam" id="PF17871">
    <property type="entry name" value="AAA_lid_9"/>
    <property type="match status" value="1"/>
</dbReference>
<dbReference type="Pfam" id="PF02861">
    <property type="entry name" value="Clp_N"/>
    <property type="match status" value="2"/>
</dbReference>
<dbReference type="Pfam" id="PF10431">
    <property type="entry name" value="ClpB_D2-small"/>
    <property type="match status" value="1"/>
</dbReference>
<dbReference type="PRINTS" id="PR00300">
    <property type="entry name" value="CLPPROTEASEA"/>
</dbReference>
<dbReference type="SMART" id="SM00382">
    <property type="entry name" value="AAA"/>
    <property type="match status" value="2"/>
</dbReference>
<dbReference type="SMART" id="SM01086">
    <property type="entry name" value="ClpB_D2-small"/>
    <property type="match status" value="1"/>
</dbReference>
<dbReference type="SUPFAM" id="SSF81923">
    <property type="entry name" value="Double Clp-N motif"/>
    <property type="match status" value="1"/>
</dbReference>
<dbReference type="SUPFAM" id="SSF52540">
    <property type="entry name" value="P-loop containing nucleoside triphosphate hydrolases"/>
    <property type="match status" value="2"/>
</dbReference>
<dbReference type="PROSITE" id="PS51903">
    <property type="entry name" value="CLP_R"/>
    <property type="match status" value="1"/>
</dbReference>
<dbReference type="PROSITE" id="PS00870">
    <property type="entry name" value="CLPAB_1"/>
    <property type="match status" value="1"/>
</dbReference>
<dbReference type="PROSITE" id="PS00871">
    <property type="entry name" value="CLPAB_2"/>
    <property type="match status" value="1"/>
</dbReference>
<gene>
    <name type="primary">CLPD2</name>
    <name type="ordered locus">Os04g0405000</name>
    <name type="ordered locus">LOC_Os04g33210</name>
    <name type="ORF">OJ000315_02.14</name>
</gene>
<evidence type="ECO:0000250" key="1"/>
<evidence type="ECO:0000255" key="2"/>
<evidence type="ECO:0000255" key="3">
    <source>
        <dbReference type="PROSITE-ProRule" id="PRU01251"/>
    </source>
</evidence>
<evidence type="ECO:0000269" key="4">
    <source>
    </source>
</evidence>
<evidence type="ECO:0000305" key="5"/>
<protein>
    <recommendedName>
        <fullName>Chaperone protein ClpD2, chloroplastic</fullName>
    </recommendedName>
    <alternativeName>
        <fullName>ATP-dependent Clp protease ATP-binding subunit ClpD homolog 2</fullName>
    </alternativeName>
    <alternativeName>
        <fullName>Casein lytic proteinase D2</fullName>
    </alternativeName>
</protein>
<sequence length="937" mass="101484">MEACCCSSSSVPSASILATGAGLRRRFSPAGAGGGGRAVAVAAGRPIRASAALLAAPAPRRRGGVVVRAVFERFTERAVKAVVFSQREARGMGDETVAPHHLLLGLVAEDRSPLGFLASGVRVERAREACRAAVGKEGLAQAPVGLATDVPFSGASKRVFEAAVEFSRNMGCNFISPEHIALGLFNLNDPTTNNVLKSLGVDSSQLAKQALTRVQGELAKDGREPVGLSSFKVREKFTPGGGKSAIVKYSNKNKEKSALALFCLDLTMRASGGLIDPVIGRKDEIERVVQIICRRTKNNPILLGEAGVGKTAIAEGLAHKIANGDVPIFLVGKRILSLDVALLMAGAKERGELEARVTSLIREVRKAGDVILFIDEVHTLIGSGIAGRGSKGAGLDIANLLKPALARGELQCIASTTLDEHRLHFDKDKALARRFQPVLVNEPSQEDAVKILLGLREKYETYHKCKYTLESINAAVYLSARYIADRHLPDKAIDLIDEAGSRARMESFKRKKEEQCSILSKSPDEYWQEIRAVQNMHEVALTNKVKYSLNQNDQEDAVDIELVGEDKTSPASMLSTSTDKPSLVGSEEIARVTSLWSGIPVQQLTADERKLLVGLDDELRKRVIGQDDAVLAISKAVKRSRVGLNDPDRPIATLIFCGPTGVGKTELTKALAASYFGSESATVRLDMSEYMERHAVSKLIGSPPGYMGFGEGGTLTEAVRRKPFTVVLLDEIEKAHPDIFNILLQIFEDGHLTDSQGRRVSFKNTLIVMTSNVGSTSISNGKRSIGFQTQTDTEEKSYAAMKSLVMEELKAFFRPELLNRIDEVVVFHPLEKTQMLAILNIMLQEVKGRILALGIGLEVSDSMKDLISQHGYDKSYGARPLRRAVTQLVEDVISEAILSGQFKPGDTIMVDTDATGKPCLSRLNDQTVQLSDPTPTL</sequence>
<keyword id="KW-0067">ATP-binding</keyword>
<keyword id="KW-0143">Chaperone</keyword>
<keyword id="KW-0150">Chloroplast</keyword>
<keyword id="KW-0547">Nucleotide-binding</keyword>
<keyword id="KW-0934">Plastid</keyword>
<keyword id="KW-1185">Reference proteome</keyword>
<keyword id="KW-0677">Repeat</keyword>
<keyword id="KW-0809">Transit peptide</keyword>
<feature type="transit peptide" description="Chloroplast" evidence="2">
    <location>
        <begin position="1"/>
        <end position="80"/>
    </location>
</feature>
<feature type="chain" id="PRO_0000412584" description="Chaperone protein ClpD2, chloroplastic">
    <location>
        <begin position="81"/>
        <end position="937"/>
    </location>
</feature>
<feature type="domain" description="Clp R" evidence="3">
    <location>
        <begin position="81"/>
        <end position="217"/>
    </location>
</feature>
<feature type="region of interest" description="Repeat 1" evidence="3">
    <location>
        <begin position="81"/>
        <end position="137"/>
    </location>
</feature>
<feature type="region of interest" description="Repeat 2" evidence="3">
    <location>
        <begin position="152"/>
        <end position="217"/>
    </location>
</feature>
<feature type="region of interest" description="I" evidence="1">
    <location>
        <begin position="259"/>
        <end position="513"/>
    </location>
</feature>
<feature type="region of interest" description="II" evidence="1">
    <location>
        <begin position="584"/>
        <end position="775"/>
    </location>
</feature>
<feature type="binding site" evidence="2">
    <location>
        <begin position="304"/>
        <end position="311"/>
    </location>
    <ligand>
        <name>ATP</name>
        <dbReference type="ChEBI" id="CHEBI:30616"/>
    </ligand>
</feature>
<feature type="binding site" evidence="2">
    <location>
        <begin position="658"/>
        <end position="665"/>
    </location>
    <ligand>
        <name>ATP</name>
        <dbReference type="ChEBI" id="CHEBI:30616"/>
    </ligand>
</feature>
<comment type="function">
    <text evidence="1">Molecular chaperone that may interact with a ClpP-like protease involved in degradation of denatured proteins in the chloroplast.</text>
</comment>
<comment type="subcellular location">
    <subcellularLocation>
        <location evidence="5">Plastid</location>
        <location evidence="5">Chloroplast</location>
    </subcellularLocation>
</comment>
<comment type="tissue specificity">
    <text evidence="4">Highly expressed in stems, culms and leaves.</text>
</comment>
<comment type="similarity">
    <text evidence="5">Belongs to the ClpA/ClpB family. ClpD subfamily.</text>
</comment>
<comment type="sequence caution" evidence="5">
    <conflict type="erroneous gene model prediction">
        <sequence resource="EMBL-CDS" id="BAF14621"/>
    </conflict>
</comment>
<comment type="sequence caution" evidence="5">
    <conflict type="erroneous gene model prediction">
        <sequence resource="EMBL-CDS" id="CAE05369"/>
    </conflict>
</comment>